<keyword id="KW-0028">Amino-acid biosynthesis</keyword>
<keyword id="KW-0057">Aromatic amino acid biosynthesis</keyword>
<keyword id="KW-0456">Lyase</keyword>
<keyword id="KW-0460">Magnesium</keyword>
<keyword id="KW-0479">Metal-binding</keyword>
<keyword id="KW-1185">Reference proteome</keyword>
<keyword id="KW-0822">Tryptophan biosynthesis</keyword>
<feature type="chain" id="PRO_0000154082" description="Anthranilate synthase component 1">
    <location>
        <begin position="1"/>
        <end position="522"/>
    </location>
</feature>
<feature type="binding site" evidence="2">
    <location>
        <position position="40"/>
    </location>
    <ligand>
        <name>L-tryptophan</name>
        <dbReference type="ChEBI" id="CHEBI:57912"/>
    </ligand>
</feature>
<feature type="binding site" evidence="2">
    <location>
        <begin position="292"/>
        <end position="294"/>
    </location>
    <ligand>
        <name>L-tryptophan</name>
        <dbReference type="ChEBI" id="CHEBI:57912"/>
    </ligand>
</feature>
<feature type="binding site" evidence="2">
    <location>
        <begin position="329"/>
        <end position="330"/>
    </location>
    <ligand>
        <name>chorismate</name>
        <dbReference type="ChEBI" id="CHEBI:29748"/>
    </ligand>
</feature>
<feature type="binding site" evidence="2">
    <location>
        <position position="362"/>
    </location>
    <ligand>
        <name>Mg(2+)</name>
        <dbReference type="ChEBI" id="CHEBI:18420"/>
    </ligand>
</feature>
<feature type="binding site" evidence="2">
    <location>
        <position position="450"/>
    </location>
    <ligand>
        <name>chorismate</name>
        <dbReference type="ChEBI" id="CHEBI:29748"/>
    </ligand>
</feature>
<feature type="binding site" evidence="2">
    <location>
        <position position="470"/>
    </location>
    <ligand>
        <name>chorismate</name>
        <dbReference type="ChEBI" id="CHEBI:29748"/>
    </ligand>
</feature>
<feature type="binding site" evidence="2">
    <location>
        <begin position="484"/>
        <end position="486"/>
    </location>
    <ligand>
        <name>chorismate</name>
        <dbReference type="ChEBI" id="CHEBI:29748"/>
    </ligand>
</feature>
<feature type="binding site" evidence="2">
    <location>
        <position position="486"/>
    </location>
    <ligand>
        <name>chorismate</name>
        <dbReference type="ChEBI" id="CHEBI:29748"/>
    </ligand>
</feature>
<feature type="binding site" evidence="2">
    <location>
        <position position="499"/>
    </location>
    <ligand>
        <name>Mg(2+)</name>
        <dbReference type="ChEBI" id="CHEBI:18420"/>
    </ligand>
</feature>
<proteinExistence type="inferred from homology"/>
<dbReference type="EC" id="4.1.3.27"/>
<dbReference type="EMBL" id="AE016826">
    <property type="protein sequence ID" value="AAO27228.1"/>
    <property type="molecule type" value="Genomic_DNA"/>
</dbReference>
<dbReference type="RefSeq" id="WP_011091629.1">
    <property type="nucleotide sequence ID" value="NC_004545.1"/>
</dbReference>
<dbReference type="SMR" id="Q89A29"/>
<dbReference type="STRING" id="224915.bbp_526"/>
<dbReference type="KEGG" id="bab:bbp_526"/>
<dbReference type="eggNOG" id="COG0147">
    <property type="taxonomic scope" value="Bacteria"/>
</dbReference>
<dbReference type="HOGENOM" id="CLU_006493_9_4_6"/>
<dbReference type="OrthoDB" id="9803598at2"/>
<dbReference type="UniPathway" id="UPA00035">
    <property type="reaction ID" value="UER00040"/>
</dbReference>
<dbReference type="Proteomes" id="UP000000601">
    <property type="component" value="Chromosome"/>
</dbReference>
<dbReference type="GO" id="GO:0004049">
    <property type="term" value="F:anthranilate synthase activity"/>
    <property type="evidence" value="ECO:0007669"/>
    <property type="project" value="UniProtKB-EC"/>
</dbReference>
<dbReference type="GO" id="GO:0046872">
    <property type="term" value="F:metal ion binding"/>
    <property type="evidence" value="ECO:0007669"/>
    <property type="project" value="UniProtKB-KW"/>
</dbReference>
<dbReference type="GO" id="GO:0000162">
    <property type="term" value="P:L-tryptophan biosynthetic process"/>
    <property type="evidence" value="ECO:0007669"/>
    <property type="project" value="UniProtKB-UniPathway"/>
</dbReference>
<dbReference type="Gene3D" id="3.60.120.10">
    <property type="entry name" value="Anthranilate synthase"/>
    <property type="match status" value="1"/>
</dbReference>
<dbReference type="InterPro" id="IPR005801">
    <property type="entry name" value="ADC_synthase"/>
</dbReference>
<dbReference type="InterPro" id="IPR019999">
    <property type="entry name" value="Anth_synth_I-like"/>
</dbReference>
<dbReference type="InterPro" id="IPR006805">
    <property type="entry name" value="Anth_synth_I_N"/>
</dbReference>
<dbReference type="InterPro" id="IPR005257">
    <property type="entry name" value="Anth_synth_I_TrpE"/>
</dbReference>
<dbReference type="InterPro" id="IPR015890">
    <property type="entry name" value="Chorismate_C"/>
</dbReference>
<dbReference type="NCBIfam" id="NF010079">
    <property type="entry name" value="PRK13564.1"/>
    <property type="match status" value="1"/>
</dbReference>
<dbReference type="NCBIfam" id="TIGR00565">
    <property type="entry name" value="trpE_proteo"/>
    <property type="match status" value="1"/>
</dbReference>
<dbReference type="PANTHER" id="PTHR11236">
    <property type="entry name" value="AMINOBENZOATE/ANTHRANILATE SYNTHASE"/>
    <property type="match status" value="1"/>
</dbReference>
<dbReference type="PANTHER" id="PTHR11236:SF49">
    <property type="entry name" value="ANTHRANILATE SYNTHASE COMPONENT 1"/>
    <property type="match status" value="1"/>
</dbReference>
<dbReference type="Pfam" id="PF04715">
    <property type="entry name" value="Anth_synt_I_N"/>
    <property type="match status" value="1"/>
</dbReference>
<dbReference type="Pfam" id="PF00425">
    <property type="entry name" value="Chorismate_bind"/>
    <property type="match status" value="1"/>
</dbReference>
<dbReference type="PIRSF" id="PIRSF001373">
    <property type="entry name" value="TrpE"/>
    <property type="match status" value="1"/>
</dbReference>
<dbReference type="PRINTS" id="PR00095">
    <property type="entry name" value="ANTSNTHASEI"/>
</dbReference>
<dbReference type="SUPFAM" id="SSF56322">
    <property type="entry name" value="ADC synthase"/>
    <property type="match status" value="1"/>
</dbReference>
<sequence>MKKNLISIDVFLTETRYQPNPTAIFNQICKKKSETLLLESAEINKKHHLESMMIIDAALKISFLNQIVIVEALTKNGVNLLSVFKSLLPKNVIILSDNNPLEIKFPILSMYLDEDQRLRSLSVFDAIRFLIKSVKNLSEFAPKSMFFGGLFSYDLITSFENLPILNTHQHCPDFCFYLSETLLILDHKNKTSIVQVTSFTNDNFEKKRLKDRLEILKNKLSKNLCPIKFDTLKNMKLWCNKTDEEYNKIIVNVKKFILQGEIFQVVPSRKFYLSCVNPLSSYEVLKKNNPSPYMFFMQDRKFTLFGASPESALKYDINSRQIEIYPIAGTRPRGRRSDGSLDLDLDNRIELEMRTNNKELAEHLMLVDLARNDLAKICEPGTRHVADLIRVDRYSHVMHLVSRVIGKLRFDLDFLHAYQACMNMGTLTGAPKVRAMELISEIEGEKRGSYGGAIGYFTGLGMLDTCIVIRSAYVENKIATIQAGAGIVLDSVPQLESDESKNKAKAVIQAIANSHSCQIEYL</sequence>
<organism>
    <name type="scientific">Buchnera aphidicola subsp. Baizongia pistaciae (strain Bp)</name>
    <dbReference type="NCBI Taxonomy" id="224915"/>
    <lineage>
        <taxon>Bacteria</taxon>
        <taxon>Pseudomonadati</taxon>
        <taxon>Pseudomonadota</taxon>
        <taxon>Gammaproteobacteria</taxon>
        <taxon>Enterobacterales</taxon>
        <taxon>Erwiniaceae</taxon>
        <taxon>Buchnera</taxon>
    </lineage>
</organism>
<accession>Q89A29</accession>
<reference key="1">
    <citation type="journal article" date="2003" name="Proc. Natl. Acad. Sci. U.S.A.">
        <title>Reductive genome evolution in Buchnera aphidicola.</title>
        <authorList>
            <person name="van Ham R.C.H.J."/>
            <person name="Kamerbeek J."/>
            <person name="Palacios C."/>
            <person name="Rausell C."/>
            <person name="Abascal F."/>
            <person name="Bastolla U."/>
            <person name="Fernandez J.M."/>
            <person name="Jimenez L."/>
            <person name="Postigo M."/>
            <person name="Silva F.J."/>
            <person name="Tamames J."/>
            <person name="Viguera E."/>
            <person name="Latorre A."/>
            <person name="Valencia A."/>
            <person name="Moran F."/>
            <person name="Moya A."/>
        </authorList>
    </citation>
    <scope>NUCLEOTIDE SEQUENCE [LARGE SCALE GENOMIC DNA]</scope>
    <source>
        <strain>Bp</strain>
    </source>
</reference>
<name>TRPE_BUCBP</name>
<evidence type="ECO:0000250" key="1"/>
<evidence type="ECO:0000250" key="2">
    <source>
        <dbReference type="UniProtKB" id="P00897"/>
    </source>
</evidence>
<evidence type="ECO:0000305" key="3"/>
<protein>
    <recommendedName>
        <fullName>Anthranilate synthase component 1</fullName>
        <shortName>AS</shortName>
        <shortName>ASI</shortName>
        <ecNumber>4.1.3.27</ecNumber>
    </recommendedName>
</protein>
<comment type="function">
    <text evidence="1">Part of a heterotetrameric complex that catalyzes the two-step biosynthesis of anthranilate, an intermediate in the biosynthesis of L-tryptophan. In the first step, the glutamine-binding beta subunit (TrpG) of anthranilate synthase (AS) provides the glutamine amidotransferase activity which generates ammonia as a substrate that, along with chorismate, is used in the second step, catalyzed by the large alpha subunit of AS (TrpE) to produce anthranilate. In the absence of TrpG, TrpE can synthesize anthranilate directly from chorismate and high concentrations of ammonia (By similarity).</text>
</comment>
<comment type="catalytic activity">
    <reaction>
        <text>chorismate + L-glutamine = anthranilate + pyruvate + L-glutamate + H(+)</text>
        <dbReference type="Rhea" id="RHEA:21732"/>
        <dbReference type="ChEBI" id="CHEBI:15361"/>
        <dbReference type="ChEBI" id="CHEBI:15378"/>
        <dbReference type="ChEBI" id="CHEBI:16567"/>
        <dbReference type="ChEBI" id="CHEBI:29748"/>
        <dbReference type="ChEBI" id="CHEBI:29985"/>
        <dbReference type="ChEBI" id="CHEBI:58359"/>
        <dbReference type="EC" id="4.1.3.27"/>
    </reaction>
</comment>
<comment type="cofactor">
    <cofactor evidence="2">
        <name>Mg(2+)</name>
        <dbReference type="ChEBI" id="CHEBI:18420"/>
    </cofactor>
    <text evidence="2">Binds 1 Mg(2+) ion per subunit.</text>
</comment>
<comment type="activity regulation">
    <text evidence="1">Feedback inhibited by tryptophan.</text>
</comment>
<comment type="pathway">
    <text>Amino-acid biosynthesis; L-tryptophan biosynthesis; L-tryptophan from chorismate: step 1/5.</text>
</comment>
<comment type="subunit">
    <text evidence="1">Heterotetramer consisting of two non-identical subunits: a beta subunit (TrpG) and a large alpha subunit (TrpE).</text>
</comment>
<comment type="similarity">
    <text evidence="3">Belongs to the anthranilate synthase component I family.</text>
</comment>
<gene>
    <name type="primary">trpE</name>
    <name type="ordered locus">bbp_526</name>
</gene>